<evidence type="ECO:0000255" key="1"/>
<evidence type="ECO:0000255" key="2">
    <source>
        <dbReference type="PROSITE-ProRule" id="PRU00720"/>
    </source>
</evidence>
<evidence type="ECO:0000255" key="3">
    <source>
        <dbReference type="PROSITE-ProRule" id="PRU01055"/>
    </source>
</evidence>
<evidence type="ECO:0000256" key="4">
    <source>
        <dbReference type="SAM" id="MobiDB-lite"/>
    </source>
</evidence>
<gene>
    <name type="primary">vps1</name>
    <name type="ORF">SPAC767.01c</name>
    <name type="ORF">SPAC9G1.14c</name>
</gene>
<organism>
    <name type="scientific">Schizosaccharomyces pombe (strain 972 / ATCC 24843)</name>
    <name type="common">Fission yeast</name>
    <dbReference type="NCBI Taxonomy" id="284812"/>
    <lineage>
        <taxon>Eukaryota</taxon>
        <taxon>Fungi</taxon>
        <taxon>Dikarya</taxon>
        <taxon>Ascomycota</taxon>
        <taxon>Taphrinomycotina</taxon>
        <taxon>Schizosaccharomycetes</taxon>
        <taxon>Schizosaccharomycetales</taxon>
        <taxon>Schizosaccharomycetaceae</taxon>
        <taxon>Schizosaccharomyces</taxon>
    </lineage>
</organism>
<proteinExistence type="inferred from homology"/>
<accession>Q9URZ5</accession>
<accession>O14309</accession>
<protein>
    <recommendedName>
        <fullName>Vacuolar protein sorting-associated protein 1</fullName>
    </recommendedName>
</protein>
<comment type="similarity">
    <text evidence="3">Belongs to the TRAFAC class dynamin-like GTPase superfamily. Dynamin/Fzo/YdjA family.</text>
</comment>
<dbReference type="EMBL" id="CU329670">
    <property type="protein sequence ID" value="CAB11498.2"/>
    <property type="molecule type" value="Genomic_DNA"/>
</dbReference>
<dbReference type="PIR" id="T50256">
    <property type="entry name" value="T50256"/>
</dbReference>
<dbReference type="RefSeq" id="XP_001713062.1">
    <property type="nucleotide sequence ID" value="XM_001713010.2"/>
</dbReference>
<dbReference type="SMR" id="Q9URZ5"/>
<dbReference type="BioGRID" id="279175">
    <property type="interactions" value="60"/>
</dbReference>
<dbReference type="FunCoup" id="Q9URZ5">
    <property type="interactions" value="20"/>
</dbReference>
<dbReference type="STRING" id="284812.Q9URZ5"/>
<dbReference type="iPTMnet" id="Q9URZ5"/>
<dbReference type="PaxDb" id="4896-SPAC767.01c.1"/>
<dbReference type="EnsemblFungi" id="SPAC767.01c.1">
    <property type="protein sequence ID" value="SPAC767.01c.1:pep"/>
    <property type="gene ID" value="SPAC767.01c"/>
</dbReference>
<dbReference type="PomBase" id="SPAC767.01c">
    <property type="gene designation" value="vps1"/>
</dbReference>
<dbReference type="VEuPathDB" id="FungiDB:SPAC767.01c"/>
<dbReference type="eggNOG" id="KOG0446">
    <property type="taxonomic scope" value="Eukaryota"/>
</dbReference>
<dbReference type="HOGENOM" id="CLU_008964_5_2_1"/>
<dbReference type="InParanoid" id="Q9URZ5"/>
<dbReference type="OMA" id="IQRRKEC"/>
<dbReference type="PhylomeDB" id="Q9URZ5"/>
<dbReference type="Reactome" id="R-SPO-169911">
    <property type="pathway name" value="Regulation of Apoptosis"/>
</dbReference>
<dbReference type="PRO" id="PR:Q9URZ5"/>
<dbReference type="Proteomes" id="UP000002485">
    <property type="component" value="Chromosome I"/>
</dbReference>
<dbReference type="GO" id="GO:0005737">
    <property type="term" value="C:cytoplasm"/>
    <property type="evidence" value="ECO:0007005"/>
    <property type="project" value="PomBase"/>
</dbReference>
<dbReference type="GO" id="GO:0005794">
    <property type="term" value="C:Golgi apparatus"/>
    <property type="evidence" value="ECO:0007005"/>
    <property type="project" value="PomBase"/>
</dbReference>
<dbReference type="GO" id="GO:0016020">
    <property type="term" value="C:membrane"/>
    <property type="evidence" value="ECO:0000318"/>
    <property type="project" value="GO_Central"/>
</dbReference>
<dbReference type="GO" id="GO:0005874">
    <property type="term" value="C:microtubule"/>
    <property type="evidence" value="ECO:0000318"/>
    <property type="project" value="GO_Central"/>
</dbReference>
<dbReference type="GO" id="GO:0005777">
    <property type="term" value="C:peroxisome"/>
    <property type="evidence" value="ECO:0000318"/>
    <property type="project" value="GO_Central"/>
</dbReference>
<dbReference type="GO" id="GO:0005525">
    <property type="term" value="F:GTP binding"/>
    <property type="evidence" value="ECO:0007669"/>
    <property type="project" value="UniProtKB-KW"/>
</dbReference>
<dbReference type="GO" id="GO:0003924">
    <property type="term" value="F:GTPase activity"/>
    <property type="evidence" value="ECO:0000318"/>
    <property type="project" value="GO_Central"/>
</dbReference>
<dbReference type="GO" id="GO:1990606">
    <property type="term" value="F:membrane scission GTPase motor activity"/>
    <property type="evidence" value="ECO:0000304"/>
    <property type="project" value="PomBase"/>
</dbReference>
<dbReference type="GO" id="GO:0008017">
    <property type="term" value="F:microtubule binding"/>
    <property type="evidence" value="ECO:0000318"/>
    <property type="project" value="GO_Central"/>
</dbReference>
<dbReference type="GO" id="GO:0006897">
    <property type="term" value="P:endocytosis"/>
    <property type="evidence" value="ECO:0000266"/>
    <property type="project" value="PomBase"/>
</dbReference>
<dbReference type="GO" id="GO:0048312">
    <property type="term" value="P:intracellular distribution of mitochondria"/>
    <property type="evidence" value="ECO:0000318"/>
    <property type="project" value="GO_Central"/>
</dbReference>
<dbReference type="GO" id="GO:0000266">
    <property type="term" value="P:mitochondrial fission"/>
    <property type="evidence" value="ECO:0000318"/>
    <property type="project" value="GO_Central"/>
</dbReference>
<dbReference type="GO" id="GO:0016559">
    <property type="term" value="P:peroxisome fission"/>
    <property type="evidence" value="ECO:0000318"/>
    <property type="project" value="GO_Central"/>
</dbReference>
<dbReference type="GO" id="GO:0007031">
    <property type="term" value="P:peroxisome organization"/>
    <property type="evidence" value="ECO:0000316"/>
    <property type="project" value="PomBase"/>
</dbReference>
<dbReference type="GO" id="GO:0042144">
    <property type="term" value="P:vacuole fusion, non-autophagic"/>
    <property type="evidence" value="ECO:0000315"/>
    <property type="project" value="PomBase"/>
</dbReference>
<dbReference type="GO" id="GO:0099050">
    <property type="term" value="P:vesicle scission"/>
    <property type="evidence" value="ECO:0000303"/>
    <property type="project" value="PomBase"/>
</dbReference>
<dbReference type="CDD" id="cd08771">
    <property type="entry name" value="DLP_1"/>
    <property type="match status" value="1"/>
</dbReference>
<dbReference type="FunFam" id="3.40.50.300:FF:000473">
    <property type="entry name" value="Vacuolar sorting-associated 1 protein"/>
    <property type="match status" value="1"/>
</dbReference>
<dbReference type="Gene3D" id="1.20.120.1240">
    <property type="entry name" value="Dynamin, middle domain"/>
    <property type="match status" value="1"/>
</dbReference>
<dbReference type="Gene3D" id="3.40.50.300">
    <property type="entry name" value="P-loop containing nucleotide triphosphate hydrolases"/>
    <property type="match status" value="1"/>
</dbReference>
<dbReference type="InterPro" id="IPR022812">
    <property type="entry name" value="Dynamin"/>
</dbReference>
<dbReference type="InterPro" id="IPR001401">
    <property type="entry name" value="Dynamin_GTPase"/>
</dbReference>
<dbReference type="InterPro" id="IPR019762">
    <property type="entry name" value="Dynamin_GTPase_CS"/>
</dbReference>
<dbReference type="InterPro" id="IPR045063">
    <property type="entry name" value="Dynamin_N"/>
</dbReference>
<dbReference type="InterPro" id="IPR000375">
    <property type="entry name" value="Dynamin_stalk"/>
</dbReference>
<dbReference type="InterPro" id="IPR030381">
    <property type="entry name" value="G_DYNAMIN_dom"/>
</dbReference>
<dbReference type="InterPro" id="IPR003130">
    <property type="entry name" value="GED"/>
</dbReference>
<dbReference type="InterPro" id="IPR020850">
    <property type="entry name" value="GED_dom"/>
</dbReference>
<dbReference type="InterPro" id="IPR027417">
    <property type="entry name" value="P-loop_NTPase"/>
</dbReference>
<dbReference type="PANTHER" id="PTHR11566">
    <property type="entry name" value="DYNAMIN"/>
    <property type="match status" value="1"/>
</dbReference>
<dbReference type="PANTHER" id="PTHR11566:SF220">
    <property type="entry name" value="VACUOLAR PROTEIN SORTING-ASSOCIATED PROTEIN 1"/>
    <property type="match status" value="1"/>
</dbReference>
<dbReference type="Pfam" id="PF01031">
    <property type="entry name" value="Dynamin_M"/>
    <property type="match status" value="1"/>
</dbReference>
<dbReference type="Pfam" id="PF00350">
    <property type="entry name" value="Dynamin_N"/>
    <property type="match status" value="1"/>
</dbReference>
<dbReference type="Pfam" id="PF02212">
    <property type="entry name" value="GED"/>
    <property type="match status" value="1"/>
</dbReference>
<dbReference type="PRINTS" id="PR00195">
    <property type="entry name" value="DYNAMIN"/>
</dbReference>
<dbReference type="SMART" id="SM00053">
    <property type="entry name" value="DYNc"/>
    <property type="match status" value="1"/>
</dbReference>
<dbReference type="SMART" id="SM00302">
    <property type="entry name" value="GED"/>
    <property type="match status" value="1"/>
</dbReference>
<dbReference type="SUPFAM" id="SSF52540">
    <property type="entry name" value="P-loop containing nucleoside triphosphate hydrolases"/>
    <property type="match status" value="1"/>
</dbReference>
<dbReference type="PROSITE" id="PS00410">
    <property type="entry name" value="G_DYNAMIN_1"/>
    <property type="match status" value="1"/>
</dbReference>
<dbReference type="PROSITE" id="PS51718">
    <property type="entry name" value="G_DYNAMIN_2"/>
    <property type="match status" value="1"/>
</dbReference>
<dbReference type="PROSITE" id="PS51388">
    <property type="entry name" value="GED"/>
    <property type="match status" value="1"/>
</dbReference>
<keyword id="KW-0342">GTP-binding</keyword>
<keyword id="KW-0505">Motor protein</keyword>
<keyword id="KW-0547">Nucleotide-binding</keyword>
<keyword id="KW-1185">Reference proteome</keyword>
<feature type="chain" id="PRO_0000206587" description="Vacuolar protein sorting-associated protein 1">
    <location>
        <begin position="1"/>
        <end position="678"/>
    </location>
</feature>
<feature type="domain" description="Dynamin-type G" evidence="3">
    <location>
        <begin position="24"/>
        <end position="311"/>
    </location>
</feature>
<feature type="domain" description="GED" evidence="2">
    <location>
        <begin position="592"/>
        <end position="678"/>
    </location>
</feature>
<feature type="region of interest" description="G1 motif" evidence="3">
    <location>
        <begin position="34"/>
        <end position="41"/>
    </location>
</feature>
<feature type="region of interest" description="G2 motif" evidence="3">
    <location>
        <begin position="60"/>
        <end position="62"/>
    </location>
</feature>
<feature type="region of interest" description="Disordered" evidence="4">
    <location>
        <begin position="71"/>
        <end position="96"/>
    </location>
</feature>
<feature type="region of interest" description="G3 motif" evidence="3">
    <location>
        <begin position="153"/>
        <end position="156"/>
    </location>
</feature>
<feature type="region of interest" description="G4 motif" evidence="3">
    <location>
        <begin position="222"/>
        <end position="225"/>
    </location>
</feature>
<feature type="region of interest" description="G5 motif" evidence="3">
    <location>
        <begin position="252"/>
        <end position="255"/>
    </location>
</feature>
<feature type="compositionally biased region" description="Basic and acidic residues" evidence="4">
    <location>
        <begin position="78"/>
        <end position="90"/>
    </location>
</feature>
<feature type="binding site" evidence="1">
    <location>
        <begin position="34"/>
        <end position="41"/>
    </location>
    <ligand>
        <name>GTP</name>
        <dbReference type="ChEBI" id="CHEBI:37565"/>
    </ligand>
</feature>
<feature type="binding site" evidence="1">
    <location>
        <begin position="153"/>
        <end position="157"/>
    </location>
    <ligand>
        <name>GTP</name>
        <dbReference type="ChEBI" id="CHEBI:37565"/>
    </ligand>
</feature>
<feature type="binding site" evidence="1">
    <location>
        <begin position="222"/>
        <end position="225"/>
    </location>
    <ligand>
        <name>GTP</name>
        <dbReference type="ChEBI" id="CHEBI:37565"/>
    </ligand>
</feature>
<sequence length="678" mass="75791">MDPSLIKVVNQLQEAFSTVGVQNLIDLPQITVVRSQSSGKSSVLENIVGRDFLPRGTGIVTRRPLVLQLINRPSASGKNEETTTDSDGKDQNNSSEWGEFLHLPGQKFFEFEKIREEIVRETEEKTGKNVGISSVPIYLRIYSPHVLTLTLVDLPGLTKVPVGDQPRDIEKQIREMVLKYISKNNAIILAVNAANTDLANSDGLKLAREVDPEGLRTIGVLTKVDLMDKGTDVVDILAGRVIPLRLGYVPVINRGQKDIEGKKSIRIALEAERNFFETHPSYGSKAQYCGTPFLARKLNMILMHHIRNTLPEIKVRINAALAKYQAELHSLGDTPVGDNSSIVLNLITDFCNEYRTVVDGRSEELSATELSGGARIAFVFHEIFSNGIQAIDPFDEVKDSDIRTILYNSSGPSPSLFMGTAAFEVIVKQQIKRLEDPSLKCVSLIYDELVRILNQLLQRPIFKRYPLLKDEFYKVVIGFFRKCMQPTNTLVMDMVAMEGSYINTVHPDFLSGHQAMAIVQSQNSKPIPVDPKTGKALTNNPVPPVETSSSSGQNFFGSFFGSKNKKRLAAMEPPPPVLRASTTLSDREKTDTEVIKLLIMSYFNIVKRTLADMVPKSISLKMIKYSKEHIQHELLEQLYKSQAFDKLLQESEVTVQRRKECEQMVESLLQASEIVSNV</sequence>
<name>VPS1_SCHPO</name>
<reference key="1">
    <citation type="journal article" date="2002" name="Nature">
        <title>The genome sequence of Schizosaccharomyces pombe.</title>
        <authorList>
            <person name="Wood V."/>
            <person name="Gwilliam R."/>
            <person name="Rajandream M.A."/>
            <person name="Lyne M.H."/>
            <person name="Lyne R."/>
            <person name="Stewart A."/>
            <person name="Sgouros J.G."/>
            <person name="Peat N."/>
            <person name="Hayles J."/>
            <person name="Baker S.G."/>
            <person name="Basham D."/>
            <person name="Bowman S."/>
            <person name="Brooks K."/>
            <person name="Brown D."/>
            <person name="Brown S."/>
            <person name="Chillingworth T."/>
            <person name="Churcher C.M."/>
            <person name="Collins M."/>
            <person name="Connor R."/>
            <person name="Cronin A."/>
            <person name="Davis P."/>
            <person name="Feltwell T."/>
            <person name="Fraser A."/>
            <person name="Gentles S."/>
            <person name="Goble A."/>
            <person name="Hamlin N."/>
            <person name="Harris D.E."/>
            <person name="Hidalgo J."/>
            <person name="Hodgson G."/>
            <person name="Holroyd S."/>
            <person name="Hornsby T."/>
            <person name="Howarth S."/>
            <person name="Huckle E.J."/>
            <person name="Hunt S."/>
            <person name="Jagels K."/>
            <person name="James K.D."/>
            <person name="Jones L."/>
            <person name="Jones M."/>
            <person name="Leather S."/>
            <person name="McDonald S."/>
            <person name="McLean J."/>
            <person name="Mooney P."/>
            <person name="Moule S."/>
            <person name="Mungall K.L."/>
            <person name="Murphy L.D."/>
            <person name="Niblett D."/>
            <person name="Odell C."/>
            <person name="Oliver K."/>
            <person name="O'Neil S."/>
            <person name="Pearson D."/>
            <person name="Quail M.A."/>
            <person name="Rabbinowitsch E."/>
            <person name="Rutherford K.M."/>
            <person name="Rutter S."/>
            <person name="Saunders D."/>
            <person name="Seeger K."/>
            <person name="Sharp S."/>
            <person name="Skelton J."/>
            <person name="Simmonds M.N."/>
            <person name="Squares R."/>
            <person name="Squares S."/>
            <person name="Stevens K."/>
            <person name="Taylor K."/>
            <person name="Taylor R.G."/>
            <person name="Tivey A."/>
            <person name="Walsh S.V."/>
            <person name="Warren T."/>
            <person name="Whitehead S."/>
            <person name="Woodward J.R."/>
            <person name="Volckaert G."/>
            <person name="Aert R."/>
            <person name="Robben J."/>
            <person name="Grymonprez B."/>
            <person name="Weltjens I."/>
            <person name="Vanstreels E."/>
            <person name="Rieger M."/>
            <person name="Schaefer M."/>
            <person name="Mueller-Auer S."/>
            <person name="Gabel C."/>
            <person name="Fuchs M."/>
            <person name="Duesterhoeft A."/>
            <person name="Fritzc C."/>
            <person name="Holzer E."/>
            <person name="Moestl D."/>
            <person name="Hilbert H."/>
            <person name="Borzym K."/>
            <person name="Langer I."/>
            <person name="Beck A."/>
            <person name="Lehrach H."/>
            <person name="Reinhardt R."/>
            <person name="Pohl T.M."/>
            <person name="Eger P."/>
            <person name="Zimmermann W."/>
            <person name="Wedler H."/>
            <person name="Wambutt R."/>
            <person name="Purnelle B."/>
            <person name="Goffeau A."/>
            <person name="Cadieu E."/>
            <person name="Dreano S."/>
            <person name="Gloux S."/>
            <person name="Lelaure V."/>
            <person name="Mottier S."/>
            <person name="Galibert F."/>
            <person name="Aves S.J."/>
            <person name="Xiang Z."/>
            <person name="Hunt C."/>
            <person name="Moore K."/>
            <person name="Hurst S.M."/>
            <person name="Lucas M."/>
            <person name="Rochet M."/>
            <person name="Gaillardin C."/>
            <person name="Tallada V.A."/>
            <person name="Garzon A."/>
            <person name="Thode G."/>
            <person name="Daga R.R."/>
            <person name="Cruzado L."/>
            <person name="Jimenez J."/>
            <person name="Sanchez M."/>
            <person name="del Rey F."/>
            <person name="Benito J."/>
            <person name="Dominguez A."/>
            <person name="Revuelta J.L."/>
            <person name="Moreno S."/>
            <person name="Armstrong J."/>
            <person name="Forsburg S.L."/>
            <person name="Cerutti L."/>
            <person name="Lowe T."/>
            <person name="McCombie W.R."/>
            <person name="Paulsen I."/>
            <person name="Potashkin J."/>
            <person name="Shpakovski G.V."/>
            <person name="Ussery D."/>
            <person name="Barrell B.G."/>
            <person name="Nurse P."/>
        </authorList>
    </citation>
    <scope>NUCLEOTIDE SEQUENCE [LARGE SCALE GENOMIC DNA]</scope>
    <source>
        <strain>972 / ATCC 24843</strain>
    </source>
</reference>